<organism>
    <name type="scientific">Shewanella baltica (strain OS195)</name>
    <dbReference type="NCBI Taxonomy" id="399599"/>
    <lineage>
        <taxon>Bacteria</taxon>
        <taxon>Pseudomonadati</taxon>
        <taxon>Pseudomonadota</taxon>
        <taxon>Gammaproteobacteria</taxon>
        <taxon>Alteromonadales</taxon>
        <taxon>Shewanellaceae</taxon>
        <taxon>Shewanella</taxon>
    </lineage>
</organism>
<protein>
    <recommendedName>
        <fullName evidence="1">S-adenosylmethionine:tRNA ribosyltransferase-isomerase</fullName>
        <ecNumber evidence="1">2.4.99.17</ecNumber>
    </recommendedName>
    <alternativeName>
        <fullName evidence="1">Queuosine biosynthesis protein QueA</fullName>
    </alternativeName>
</protein>
<name>QUEA_SHEB9</name>
<reference key="1">
    <citation type="submission" date="2007-11" db="EMBL/GenBank/DDBJ databases">
        <title>Complete sequence of chromosome of Shewanella baltica OS195.</title>
        <authorList>
            <consortium name="US DOE Joint Genome Institute"/>
            <person name="Copeland A."/>
            <person name="Lucas S."/>
            <person name="Lapidus A."/>
            <person name="Barry K."/>
            <person name="Glavina del Rio T."/>
            <person name="Dalin E."/>
            <person name="Tice H."/>
            <person name="Pitluck S."/>
            <person name="Chain P."/>
            <person name="Malfatti S."/>
            <person name="Shin M."/>
            <person name="Vergez L."/>
            <person name="Schmutz J."/>
            <person name="Larimer F."/>
            <person name="Land M."/>
            <person name="Hauser L."/>
            <person name="Kyrpides N."/>
            <person name="Kim E."/>
            <person name="Brettar I."/>
            <person name="Rodrigues J."/>
            <person name="Konstantinidis K."/>
            <person name="Klappenbach J."/>
            <person name="Hofle M."/>
            <person name="Tiedje J."/>
            <person name="Richardson P."/>
        </authorList>
    </citation>
    <scope>NUCLEOTIDE SEQUENCE [LARGE SCALE GENOMIC DNA]</scope>
    <source>
        <strain>OS195</strain>
    </source>
</reference>
<evidence type="ECO:0000255" key="1">
    <source>
        <dbReference type="HAMAP-Rule" id="MF_00113"/>
    </source>
</evidence>
<keyword id="KW-0963">Cytoplasm</keyword>
<keyword id="KW-0671">Queuosine biosynthesis</keyword>
<keyword id="KW-0949">S-adenosyl-L-methionine</keyword>
<keyword id="KW-0808">Transferase</keyword>
<feature type="chain" id="PRO_1000076018" description="S-adenosylmethionine:tRNA ribosyltransferase-isomerase">
    <location>
        <begin position="1"/>
        <end position="345"/>
    </location>
</feature>
<gene>
    <name evidence="1" type="primary">queA</name>
    <name type="ordered locus">Sbal195_2883</name>
</gene>
<dbReference type="EC" id="2.4.99.17" evidence="1"/>
<dbReference type="EMBL" id="CP000891">
    <property type="protein sequence ID" value="ABX50049.1"/>
    <property type="molecule type" value="Genomic_DNA"/>
</dbReference>
<dbReference type="RefSeq" id="WP_006082278.1">
    <property type="nucleotide sequence ID" value="NC_009997.1"/>
</dbReference>
<dbReference type="SMR" id="A9KUN1"/>
<dbReference type="GeneID" id="11772966"/>
<dbReference type="KEGG" id="sbn:Sbal195_2883"/>
<dbReference type="HOGENOM" id="CLU_039110_1_0_6"/>
<dbReference type="UniPathway" id="UPA00392"/>
<dbReference type="Proteomes" id="UP000000770">
    <property type="component" value="Chromosome"/>
</dbReference>
<dbReference type="GO" id="GO:0005737">
    <property type="term" value="C:cytoplasm"/>
    <property type="evidence" value="ECO:0007669"/>
    <property type="project" value="UniProtKB-SubCell"/>
</dbReference>
<dbReference type="GO" id="GO:0051075">
    <property type="term" value="F:S-adenosylmethionine:tRNA ribosyltransferase-isomerase activity"/>
    <property type="evidence" value="ECO:0007669"/>
    <property type="project" value="UniProtKB-EC"/>
</dbReference>
<dbReference type="GO" id="GO:0008616">
    <property type="term" value="P:queuosine biosynthetic process"/>
    <property type="evidence" value="ECO:0007669"/>
    <property type="project" value="UniProtKB-UniRule"/>
</dbReference>
<dbReference type="GO" id="GO:0002099">
    <property type="term" value="P:tRNA wobble guanine modification"/>
    <property type="evidence" value="ECO:0007669"/>
    <property type="project" value="TreeGrafter"/>
</dbReference>
<dbReference type="FunFam" id="2.40.10.240:FF:000001">
    <property type="entry name" value="S-adenosylmethionine:tRNA ribosyltransferase-isomerase"/>
    <property type="match status" value="1"/>
</dbReference>
<dbReference type="FunFam" id="3.40.1780.10:FF:000001">
    <property type="entry name" value="S-adenosylmethionine:tRNA ribosyltransferase-isomerase"/>
    <property type="match status" value="1"/>
</dbReference>
<dbReference type="Gene3D" id="2.40.10.240">
    <property type="entry name" value="QueA-like"/>
    <property type="match status" value="1"/>
</dbReference>
<dbReference type="Gene3D" id="3.40.1780.10">
    <property type="entry name" value="QueA-like"/>
    <property type="match status" value="1"/>
</dbReference>
<dbReference type="HAMAP" id="MF_00113">
    <property type="entry name" value="QueA"/>
    <property type="match status" value="1"/>
</dbReference>
<dbReference type="InterPro" id="IPR003699">
    <property type="entry name" value="QueA"/>
</dbReference>
<dbReference type="InterPro" id="IPR042118">
    <property type="entry name" value="QueA_dom1"/>
</dbReference>
<dbReference type="InterPro" id="IPR042119">
    <property type="entry name" value="QueA_dom2"/>
</dbReference>
<dbReference type="InterPro" id="IPR036100">
    <property type="entry name" value="QueA_sf"/>
</dbReference>
<dbReference type="NCBIfam" id="NF001140">
    <property type="entry name" value="PRK00147.1"/>
    <property type="match status" value="1"/>
</dbReference>
<dbReference type="NCBIfam" id="TIGR00113">
    <property type="entry name" value="queA"/>
    <property type="match status" value="1"/>
</dbReference>
<dbReference type="PANTHER" id="PTHR30307">
    <property type="entry name" value="S-ADENOSYLMETHIONINE:TRNA RIBOSYLTRANSFERASE-ISOMERASE"/>
    <property type="match status" value="1"/>
</dbReference>
<dbReference type="PANTHER" id="PTHR30307:SF0">
    <property type="entry name" value="S-ADENOSYLMETHIONINE:TRNA RIBOSYLTRANSFERASE-ISOMERASE"/>
    <property type="match status" value="1"/>
</dbReference>
<dbReference type="Pfam" id="PF02547">
    <property type="entry name" value="Queuosine_synth"/>
    <property type="match status" value="1"/>
</dbReference>
<dbReference type="SUPFAM" id="SSF111337">
    <property type="entry name" value="QueA-like"/>
    <property type="match status" value="1"/>
</dbReference>
<proteinExistence type="inferred from homology"/>
<sequence>MRVADFSFDLPDELIARYPMAQRNASRLLTLDGNSGALGDKQFTDLLGMINPGDLMVFNNTRVIPARMFGQKASGGKLEILVERMLDDKRILAHVRSSKSPKVDSLILLDGGYQMKMVARHDTLFELELLSELTILEVLEAVGHMPLPPYIDRPDEDADKERYQTVYNQNPGAVAAPTAGLHFDDAMLDALKAKGVNIAFVTLHVGAGTFQPVRVDTILEHKMHSEWANVPQDVVDLIAQTKAAGKRVVAVGTTSVRSLESAARASQGELKAFSGDTDIFIYPGYQFQVVDAMVTNFHLPESTLIMLVSAFAGFDHVMAAYQHAIAQKYRFFSYGDAMFVTKKAH</sequence>
<comment type="function">
    <text evidence="1">Transfers and isomerizes the ribose moiety from AdoMet to the 7-aminomethyl group of 7-deazaguanine (preQ1-tRNA) to give epoxyqueuosine (oQ-tRNA).</text>
</comment>
<comment type="catalytic activity">
    <reaction evidence="1">
        <text>7-aminomethyl-7-carbaguanosine(34) in tRNA + S-adenosyl-L-methionine = epoxyqueuosine(34) in tRNA + adenine + L-methionine + 2 H(+)</text>
        <dbReference type="Rhea" id="RHEA:32155"/>
        <dbReference type="Rhea" id="RHEA-COMP:10342"/>
        <dbReference type="Rhea" id="RHEA-COMP:18582"/>
        <dbReference type="ChEBI" id="CHEBI:15378"/>
        <dbReference type="ChEBI" id="CHEBI:16708"/>
        <dbReference type="ChEBI" id="CHEBI:57844"/>
        <dbReference type="ChEBI" id="CHEBI:59789"/>
        <dbReference type="ChEBI" id="CHEBI:82833"/>
        <dbReference type="ChEBI" id="CHEBI:194443"/>
        <dbReference type="EC" id="2.4.99.17"/>
    </reaction>
</comment>
<comment type="pathway">
    <text evidence="1">tRNA modification; tRNA-queuosine biosynthesis.</text>
</comment>
<comment type="subunit">
    <text evidence="1">Monomer.</text>
</comment>
<comment type="subcellular location">
    <subcellularLocation>
        <location evidence="1">Cytoplasm</location>
    </subcellularLocation>
</comment>
<comment type="similarity">
    <text evidence="1">Belongs to the QueA family.</text>
</comment>
<accession>A9KUN1</accession>